<evidence type="ECO:0000250" key="1"/>
<evidence type="ECO:0000255" key="2">
    <source>
        <dbReference type="PROSITE-ProRule" id="PRU00152"/>
    </source>
</evidence>
<evidence type="ECO:0000255" key="3">
    <source>
        <dbReference type="PROSITE-ProRule" id="PRU00726"/>
    </source>
</evidence>
<evidence type="ECO:0000256" key="4">
    <source>
        <dbReference type="SAM" id="MobiDB-lite"/>
    </source>
</evidence>
<evidence type="ECO:0000305" key="5"/>
<evidence type="ECO:0000312" key="6">
    <source>
        <dbReference type="EMBL" id="EAZ28269.1"/>
    </source>
</evidence>
<sequence>MQVQGFFDRLTGRNKEAWKEGRIRGTAVLVKKDVLGLGDFHASLLDGVHNILGHKEGVAFRLVSATARDPSNGGRGKLGKPAHLEELVVTMKSTAAGESVFRVAFEWDESQGIPGAVVVTNSNRSEFFLKTLTLDGVPGKGTVVFVANSWIYPADNYQYERVFFANDTYLPSKMPAPLIPYRQEELNILRGDGKIGPYKEHDRIYRYDYYNDLGQPDKGSKLVRPVLGGSQELPYPRRGRTGRAPTKTDPNTESRLPLLDLNIYVPRDERFGHLKMSDFLGYSLKAIVEGVLPIIRTYVDTTPKEFDSFQDIMELYEGGLKVANASALAEIKKRVPFELIKSLLPVAGDQVLKLPLPHVIKEDKFAWRTDEEFAREMLAGVNPVMIKRLTNFPAKSTLDPNVYGDHTSKITEAHIKHNMEGLTVQNALKGNRLFILDHHDHFMPFLDKINKLDGNFIYASRTILLLKDDGTLKPLAIELSLPHPDGQQHGAVSKVYTPANTGVESQIWQLAKAYASVNDSAWHQLISHWLNTHAVIEPFVIATNRQLSVVHPVHKLLSPHYRDTMNINALARQTLINADGIFEKTVFPGKYALEMSSVVYKNWKFTEQALPVDLVKRGVAVPDPTSPYNVRLLIKDYPYAVDGLVIWWAIERWVGEYLAIYYPNDGVLRGDEELQAWWKEVREVGHGDLKDQDWWPKMDTVQELTRACTIIIWIASALHAAVNFGQYPYAGFLPNRPTVSRRPMPEPGTEEYAKLERGGDEADLVFIHTITSQFQTILGISLIEILSKHSSDEVYLGQRDTPEWTSDAKALDAFKRFGSRLVDIENRIKDMNGNSALKNRNGPVKMPYMLLYPNTSDVTKEKGQGLTAMGIPNSISI</sequence>
<reference key="1">
    <citation type="journal article" date="2005" name="Genome Res.">
        <title>Sequence, annotation, and analysis of synteny between rice chromosome 3 and diverged grass species.</title>
        <authorList>
            <consortium name="The rice chromosome 3 sequencing consortium"/>
            <person name="Buell C.R."/>
            <person name="Yuan Q."/>
            <person name="Ouyang S."/>
            <person name="Liu J."/>
            <person name="Zhu W."/>
            <person name="Wang A."/>
            <person name="Maiti R."/>
            <person name="Haas B."/>
            <person name="Wortman J."/>
            <person name="Pertea M."/>
            <person name="Jones K.M."/>
            <person name="Kim M."/>
            <person name="Overton L."/>
            <person name="Tsitrin T."/>
            <person name="Fadrosh D."/>
            <person name="Bera J."/>
            <person name="Weaver B."/>
            <person name="Jin S."/>
            <person name="Johri S."/>
            <person name="Reardon M."/>
            <person name="Webb K."/>
            <person name="Hill J."/>
            <person name="Moffat K."/>
            <person name="Tallon L."/>
            <person name="Van Aken S."/>
            <person name="Lewis M."/>
            <person name="Utterback T."/>
            <person name="Feldblyum T."/>
            <person name="Zismann V."/>
            <person name="Iobst S."/>
            <person name="Hsiao J."/>
            <person name="de Vazeille A.R."/>
            <person name="Salzberg S.L."/>
            <person name="White O."/>
            <person name="Fraser C.M."/>
            <person name="Yu Y."/>
            <person name="Kim H."/>
            <person name="Rambo T."/>
            <person name="Currie J."/>
            <person name="Collura K."/>
            <person name="Kernodle-Thompson S."/>
            <person name="Wei F."/>
            <person name="Kudrna K."/>
            <person name="Ammiraju J.S.S."/>
            <person name="Luo M."/>
            <person name="Goicoechea J.L."/>
            <person name="Wing R.A."/>
            <person name="Henry D."/>
            <person name="Oates R."/>
            <person name="Palmer M."/>
            <person name="Pries G."/>
            <person name="Saski C."/>
            <person name="Simmons J."/>
            <person name="Soderlund C."/>
            <person name="Nelson W."/>
            <person name="de la Bastide M."/>
            <person name="Spiegel L."/>
            <person name="Nascimento L."/>
            <person name="Huang E."/>
            <person name="Preston R."/>
            <person name="Zutavern T."/>
            <person name="Palmer L."/>
            <person name="O'Shaughnessy A."/>
            <person name="Dike S."/>
            <person name="McCombie W.R."/>
            <person name="Minx P."/>
            <person name="Cordum H."/>
            <person name="Wilson R."/>
            <person name="Jin W."/>
            <person name="Lee H.R."/>
            <person name="Jiang J."/>
            <person name="Jackson S."/>
        </authorList>
    </citation>
    <scope>NUCLEOTIDE SEQUENCE [LARGE SCALE GENOMIC DNA]</scope>
    <source>
        <strain>cv. Nipponbare</strain>
    </source>
</reference>
<reference key="2">
    <citation type="journal article" date="2005" name="Nature">
        <title>The map-based sequence of the rice genome.</title>
        <authorList>
            <consortium name="International rice genome sequencing project (IRGSP)"/>
        </authorList>
    </citation>
    <scope>NUCLEOTIDE SEQUENCE [LARGE SCALE GENOMIC DNA]</scope>
    <source>
        <strain>cv. Nipponbare</strain>
    </source>
</reference>
<reference key="3">
    <citation type="journal article" date="2013" name="Rice">
        <title>Improvement of the Oryza sativa Nipponbare reference genome using next generation sequence and optical map data.</title>
        <authorList>
            <person name="Kawahara Y."/>
            <person name="de la Bastide M."/>
            <person name="Hamilton J.P."/>
            <person name="Kanamori H."/>
            <person name="McCombie W.R."/>
            <person name="Ouyang S."/>
            <person name="Schwartz D.C."/>
            <person name="Tanaka T."/>
            <person name="Wu J."/>
            <person name="Zhou S."/>
            <person name="Childs K.L."/>
            <person name="Davidson R.M."/>
            <person name="Lin H."/>
            <person name="Quesada-Ocampo L."/>
            <person name="Vaillancourt B."/>
            <person name="Sakai H."/>
            <person name="Lee S.S."/>
            <person name="Kim J."/>
            <person name="Numa H."/>
            <person name="Itoh T."/>
            <person name="Buell C.R."/>
            <person name="Matsumoto T."/>
        </authorList>
    </citation>
    <scope>GENOME REANNOTATION</scope>
    <source>
        <strain>cv. Nipponbare</strain>
    </source>
</reference>
<reference key="4">
    <citation type="journal article" date="2005" name="PLoS Biol.">
        <title>The genomes of Oryza sativa: a history of duplications.</title>
        <authorList>
            <person name="Yu J."/>
            <person name="Wang J."/>
            <person name="Lin W."/>
            <person name="Li S."/>
            <person name="Li H."/>
            <person name="Zhou J."/>
            <person name="Ni P."/>
            <person name="Dong W."/>
            <person name="Hu S."/>
            <person name="Zeng C."/>
            <person name="Zhang J."/>
            <person name="Zhang Y."/>
            <person name="Li R."/>
            <person name="Xu Z."/>
            <person name="Li S."/>
            <person name="Li X."/>
            <person name="Zheng H."/>
            <person name="Cong L."/>
            <person name="Lin L."/>
            <person name="Yin J."/>
            <person name="Geng J."/>
            <person name="Li G."/>
            <person name="Shi J."/>
            <person name="Liu J."/>
            <person name="Lv H."/>
            <person name="Li J."/>
            <person name="Wang J."/>
            <person name="Deng Y."/>
            <person name="Ran L."/>
            <person name="Shi X."/>
            <person name="Wang X."/>
            <person name="Wu Q."/>
            <person name="Li C."/>
            <person name="Ren X."/>
            <person name="Wang J."/>
            <person name="Wang X."/>
            <person name="Li D."/>
            <person name="Liu D."/>
            <person name="Zhang X."/>
            <person name="Ji Z."/>
            <person name="Zhao W."/>
            <person name="Sun Y."/>
            <person name="Zhang Z."/>
            <person name="Bao J."/>
            <person name="Han Y."/>
            <person name="Dong L."/>
            <person name="Ji J."/>
            <person name="Chen P."/>
            <person name="Wu S."/>
            <person name="Liu J."/>
            <person name="Xiao Y."/>
            <person name="Bu D."/>
            <person name="Tan J."/>
            <person name="Yang L."/>
            <person name="Ye C."/>
            <person name="Zhang J."/>
            <person name="Xu J."/>
            <person name="Zhou Y."/>
            <person name="Yu Y."/>
            <person name="Zhang B."/>
            <person name="Zhuang S."/>
            <person name="Wei H."/>
            <person name="Liu B."/>
            <person name="Lei M."/>
            <person name="Yu H."/>
            <person name="Li Y."/>
            <person name="Xu H."/>
            <person name="Wei S."/>
            <person name="He X."/>
            <person name="Fang L."/>
            <person name="Zhang Z."/>
            <person name="Zhang Y."/>
            <person name="Huang X."/>
            <person name="Su Z."/>
            <person name="Tong W."/>
            <person name="Li J."/>
            <person name="Tong Z."/>
            <person name="Li S."/>
            <person name="Ye J."/>
            <person name="Wang L."/>
            <person name="Fang L."/>
            <person name="Lei T."/>
            <person name="Chen C.-S."/>
            <person name="Chen H.-C."/>
            <person name="Xu Z."/>
            <person name="Li H."/>
            <person name="Huang H."/>
            <person name="Zhang F."/>
            <person name="Xu H."/>
            <person name="Li N."/>
            <person name="Zhao C."/>
            <person name="Li S."/>
            <person name="Dong L."/>
            <person name="Huang Y."/>
            <person name="Li L."/>
            <person name="Xi Y."/>
            <person name="Qi Q."/>
            <person name="Li W."/>
            <person name="Zhang B."/>
            <person name="Hu W."/>
            <person name="Zhang Y."/>
            <person name="Tian X."/>
            <person name="Jiao Y."/>
            <person name="Liang X."/>
            <person name="Jin J."/>
            <person name="Gao L."/>
            <person name="Zheng W."/>
            <person name="Hao B."/>
            <person name="Liu S.-M."/>
            <person name="Wang W."/>
            <person name="Yuan L."/>
            <person name="Cao M."/>
            <person name="McDermott J."/>
            <person name="Samudrala R."/>
            <person name="Wang J."/>
            <person name="Wong G.K.-S."/>
            <person name="Yang H."/>
        </authorList>
    </citation>
    <scope>NUCLEOTIDE SEQUENCE [LARGE SCALE GENOMIC DNA]</scope>
    <source>
        <strain>cv. Nipponbare</strain>
    </source>
</reference>
<reference key="5">
    <citation type="journal article" date="2003" name="Science">
        <title>Collection, mapping, and annotation of over 28,000 cDNA clones from japonica rice.</title>
        <authorList>
            <consortium name="The rice full-length cDNA consortium"/>
        </authorList>
    </citation>
    <scope>NUCLEOTIDE SEQUENCE [LARGE SCALE MRNA]</scope>
    <source>
        <strain>cv. Nipponbare</strain>
    </source>
</reference>
<dbReference type="EC" id="1.13.11.58"/>
<dbReference type="EMBL" id="AC093017">
    <property type="protein sequence ID" value="AAX95641.1"/>
    <property type="molecule type" value="Genomic_DNA"/>
</dbReference>
<dbReference type="EMBL" id="DP000009">
    <property type="protein sequence ID" value="ABF98392.1"/>
    <property type="molecule type" value="Genomic_DNA"/>
</dbReference>
<dbReference type="EMBL" id="AP014959">
    <property type="protein sequence ID" value="BAS85919.1"/>
    <property type="molecule type" value="Genomic_DNA"/>
</dbReference>
<dbReference type="EMBL" id="CM000140">
    <property type="protein sequence ID" value="EAZ28269.1"/>
    <property type="molecule type" value="Genomic_DNA"/>
</dbReference>
<dbReference type="EMBL" id="AK072689">
    <property type="status" value="NOT_ANNOTATED_CDS"/>
    <property type="molecule type" value="mRNA"/>
</dbReference>
<dbReference type="RefSeq" id="XP_015632132.1">
    <property type="nucleotide sequence ID" value="XM_015776646.1"/>
</dbReference>
<dbReference type="SMR" id="Q53RB0"/>
<dbReference type="FunCoup" id="Q53RB0">
    <property type="interactions" value="438"/>
</dbReference>
<dbReference type="STRING" id="39947.Q53RB0"/>
<dbReference type="PaxDb" id="39947-Q53RB0"/>
<dbReference type="EnsemblPlants" id="Os03t0700700-01">
    <property type="protein sequence ID" value="Os03t0700700-01"/>
    <property type="gene ID" value="Os03g0700700"/>
</dbReference>
<dbReference type="Gramene" id="Os03t0700700-01">
    <property type="protein sequence ID" value="Os03t0700700-01"/>
    <property type="gene ID" value="Os03g0700700"/>
</dbReference>
<dbReference type="eggNOG" id="ENOG502QVKD">
    <property type="taxonomic scope" value="Eukaryota"/>
</dbReference>
<dbReference type="InParanoid" id="Q53RB0"/>
<dbReference type="OMA" id="HRYTHDR"/>
<dbReference type="OrthoDB" id="407298at2759"/>
<dbReference type="UniPathway" id="UPA00382"/>
<dbReference type="Proteomes" id="UP000000763">
    <property type="component" value="Chromosome 3"/>
</dbReference>
<dbReference type="Proteomes" id="UP000007752">
    <property type="component" value="Chromosome 3"/>
</dbReference>
<dbReference type="Proteomes" id="UP000059680">
    <property type="component" value="Chromosome 3"/>
</dbReference>
<dbReference type="ExpressionAtlas" id="Q53RB0">
    <property type="expression patterns" value="baseline and differential"/>
</dbReference>
<dbReference type="GO" id="GO:1990136">
    <property type="term" value="F:linoleate 9S-lipoxygenase activity"/>
    <property type="evidence" value="ECO:0007669"/>
    <property type="project" value="UniProtKB-EC"/>
</dbReference>
<dbReference type="GO" id="GO:0046872">
    <property type="term" value="F:metal ion binding"/>
    <property type="evidence" value="ECO:0007669"/>
    <property type="project" value="UniProtKB-KW"/>
</dbReference>
<dbReference type="GO" id="GO:0016702">
    <property type="term" value="F:oxidoreductase activity, acting on single donors with incorporation of molecular oxygen, incorporation of two atoms of oxygen"/>
    <property type="evidence" value="ECO:0000318"/>
    <property type="project" value="GO_Central"/>
</dbReference>
<dbReference type="GO" id="GO:0006633">
    <property type="term" value="P:fatty acid biosynthetic process"/>
    <property type="evidence" value="ECO:0007669"/>
    <property type="project" value="UniProtKB-KW"/>
</dbReference>
<dbReference type="GO" id="GO:0034440">
    <property type="term" value="P:lipid oxidation"/>
    <property type="evidence" value="ECO:0000318"/>
    <property type="project" value="GO_Central"/>
</dbReference>
<dbReference type="GO" id="GO:0031408">
    <property type="term" value="P:oxylipin biosynthetic process"/>
    <property type="evidence" value="ECO:0007669"/>
    <property type="project" value="UniProtKB-UniPathway"/>
</dbReference>
<dbReference type="CDD" id="cd01751">
    <property type="entry name" value="PLAT_LH2"/>
    <property type="match status" value="1"/>
</dbReference>
<dbReference type="FunFam" id="1.20.245.10:FF:000002">
    <property type="entry name" value="Lipoxygenase"/>
    <property type="match status" value="1"/>
</dbReference>
<dbReference type="FunFam" id="3.10.450.60:FF:000002">
    <property type="entry name" value="Lipoxygenase"/>
    <property type="match status" value="1"/>
</dbReference>
<dbReference type="FunFam" id="4.10.372.10:FF:000001">
    <property type="entry name" value="Lipoxygenase"/>
    <property type="match status" value="1"/>
</dbReference>
<dbReference type="FunFam" id="4.10.375.10:FF:000001">
    <property type="entry name" value="Lipoxygenase"/>
    <property type="match status" value="1"/>
</dbReference>
<dbReference type="Gene3D" id="3.10.450.60">
    <property type="match status" value="1"/>
</dbReference>
<dbReference type="Gene3D" id="4.10.375.10">
    <property type="entry name" value="Lipoxygenase-1, Domain 2"/>
    <property type="match status" value="1"/>
</dbReference>
<dbReference type="Gene3D" id="4.10.372.10">
    <property type="entry name" value="Lipoxygenase-1, Domain 3"/>
    <property type="match status" value="1"/>
</dbReference>
<dbReference type="Gene3D" id="1.20.245.10">
    <property type="entry name" value="Lipoxygenase-1, Domain 5"/>
    <property type="match status" value="1"/>
</dbReference>
<dbReference type="Gene3D" id="2.60.60.20">
    <property type="entry name" value="PLAT/LH2 domain"/>
    <property type="match status" value="1"/>
</dbReference>
<dbReference type="InterPro" id="IPR000907">
    <property type="entry name" value="LipOase"/>
</dbReference>
<dbReference type="InterPro" id="IPR013819">
    <property type="entry name" value="LipOase_C"/>
</dbReference>
<dbReference type="InterPro" id="IPR036226">
    <property type="entry name" value="LipOase_C_sf"/>
</dbReference>
<dbReference type="InterPro" id="IPR020834">
    <property type="entry name" value="LipOase_CS"/>
</dbReference>
<dbReference type="InterPro" id="IPR020833">
    <property type="entry name" value="LipOase_Fe_BS"/>
</dbReference>
<dbReference type="InterPro" id="IPR001246">
    <property type="entry name" value="LipOase_plant"/>
</dbReference>
<dbReference type="InterPro" id="IPR042057">
    <property type="entry name" value="Lipoxy_PLAT/LH2"/>
</dbReference>
<dbReference type="InterPro" id="IPR027433">
    <property type="entry name" value="Lipoxygenase_dom_3"/>
</dbReference>
<dbReference type="InterPro" id="IPR001024">
    <property type="entry name" value="PLAT/LH2_dom"/>
</dbReference>
<dbReference type="InterPro" id="IPR036392">
    <property type="entry name" value="PLAT/LH2_dom_sf"/>
</dbReference>
<dbReference type="PANTHER" id="PTHR11771">
    <property type="entry name" value="LIPOXYGENASE"/>
    <property type="match status" value="1"/>
</dbReference>
<dbReference type="Pfam" id="PF00305">
    <property type="entry name" value="Lipoxygenase"/>
    <property type="match status" value="1"/>
</dbReference>
<dbReference type="Pfam" id="PF01477">
    <property type="entry name" value="PLAT"/>
    <property type="match status" value="1"/>
</dbReference>
<dbReference type="PRINTS" id="PR00087">
    <property type="entry name" value="LIPOXYGENASE"/>
</dbReference>
<dbReference type="PRINTS" id="PR00468">
    <property type="entry name" value="PLTLPOXGNASE"/>
</dbReference>
<dbReference type="SMART" id="SM00308">
    <property type="entry name" value="LH2"/>
    <property type="match status" value="1"/>
</dbReference>
<dbReference type="SUPFAM" id="SSF49723">
    <property type="entry name" value="Lipase/lipooxygenase domain (PLAT/LH2 domain)"/>
    <property type="match status" value="1"/>
</dbReference>
<dbReference type="SUPFAM" id="SSF48484">
    <property type="entry name" value="Lipoxigenase"/>
    <property type="match status" value="1"/>
</dbReference>
<dbReference type="PROSITE" id="PS00711">
    <property type="entry name" value="LIPOXYGENASE_1"/>
    <property type="match status" value="1"/>
</dbReference>
<dbReference type="PROSITE" id="PS00081">
    <property type="entry name" value="LIPOXYGENASE_2"/>
    <property type="match status" value="1"/>
</dbReference>
<dbReference type="PROSITE" id="PS51393">
    <property type="entry name" value="LIPOXYGENASE_3"/>
    <property type="match status" value="1"/>
</dbReference>
<dbReference type="PROSITE" id="PS50095">
    <property type="entry name" value="PLAT"/>
    <property type="match status" value="1"/>
</dbReference>
<organism>
    <name type="scientific">Oryza sativa subsp. japonica</name>
    <name type="common">Rice</name>
    <dbReference type="NCBI Taxonomy" id="39947"/>
    <lineage>
        <taxon>Eukaryota</taxon>
        <taxon>Viridiplantae</taxon>
        <taxon>Streptophyta</taxon>
        <taxon>Embryophyta</taxon>
        <taxon>Tracheophyta</taxon>
        <taxon>Spermatophyta</taxon>
        <taxon>Magnoliopsida</taxon>
        <taxon>Liliopsida</taxon>
        <taxon>Poales</taxon>
        <taxon>Poaceae</taxon>
        <taxon>BOP clade</taxon>
        <taxon>Oryzoideae</taxon>
        <taxon>Oryzeae</taxon>
        <taxon>Oryzinae</taxon>
        <taxon>Oryza</taxon>
        <taxon>Oryza sativa</taxon>
    </lineage>
</organism>
<protein>
    <recommendedName>
        <fullName>Probable linoleate 9S-lipoxygenase 4</fullName>
        <ecNumber>1.13.11.58</ecNumber>
    </recommendedName>
    <alternativeName>
        <fullName>Lipoxygenase 4</fullName>
    </alternativeName>
</protein>
<keyword id="KW-0223">Dioxygenase</keyword>
<keyword id="KW-0275">Fatty acid biosynthesis</keyword>
<keyword id="KW-0276">Fatty acid metabolism</keyword>
<keyword id="KW-0408">Iron</keyword>
<keyword id="KW-0444">Lipid biosynthesis</keyword>
<keyword id="KW-0443">Lipid metabolism</keyword>
<keyword id="KW-0479">Metal-binding</keyword>
<keyword id="KW-0560">Oxidoreductase</keyword>
<keyword id="KW-0925">Oxylipin biosynthesis</keyword>
<keyword id="KW-1185">Reference proteome</keyword>
<gene>
    <name type="ordered locus">Os03g0700700</name>
    <name type="ordered locus">LOC_Os03g49380</name>
    <name evidence="6" type="ORF">OsJ_12241</name>
</gene>
<name>LOX4_ORYSJ</name>
<comment type="function">
    <text evidence="1">Plant lipoxygenase may be involved in a number of diverse aspects of plant physiology including growth and development, pest resistance, and senescence or responses to wounding. Catalyzes the hydroperoxidation of lipids containing a cis,cis-1,4-pentadiene structure (By similarity).</text>
</comment>
<comment type="catalytic activity">
    <reaction>
        <text>(9Z,12Z)-octadecadienoate + O2 = (9S)-hydroperoxy-(10E,12Z)-octadecadienoate</text>
        <dbReference type="Rhea" id="RHEA:30291"/>
        <dbReference type="ChEBI" id="CHEBI:15379"/>
        <dbReference type="ChEBI" id="CHEBI:30245"/>
        <dbReference type="ChEBI" id="CHEBI:60955"/>
        <dbReference type="EC" id="1.13.11.58"/>
    </reaction>
</comment>
<comment type="cofactor">
    <cofactor evidence="3">
        <name>Fe cation</name>
        <dbReference type="ChEBI" id="CHEBI:24875"/>
    </cofactor>
    <text evidence="3">Binds 1 Fe cation per subunit. Iron is tightly bound.</text>
</comment>
<comment type="pathway">
    <text evidence="3">Lipid metabolism; oxylipin biosynthesis.</text>
</comment>
<comment type="similarity">
    <text evidence="5">Belongs to the lipoxygenase family.</text>
</comment>
<comment type="sequence caution" evidence="5">
    <conflict type="frameshift">
        <sequence resource="EMBL" id="AK072689"/>
    </conflict>
</comment>
<proteinExistence type="evidence at transcript level"/>
<feature type="chain" id="PRO_0000220710" description="Probable linoleate 9S-lipoxygenase 4">
    <location>
        <begin position="1"/>
        <end position="877"/>
    </location>
</feature>
<feature type="domain" description="PLAT" evidence="2">
    <location>
        <begin position="38"/>
        <end position="165"/>
    </location>
</feature>
<feature type="domain" description="Lipoxygenase" evidence="3">
    <location>
        <begin position="168"/>
        <end position="877"/>
    </location>
</feature>
<feature type="region of interest" description="Disordered" evidence="4">
    <location>
        <begin position="229"/>
        <end position="252"/>
    </location>
</feature>
<feature type="binding site" evidence="3">
    <location>
        <position position="528"/>
    </location>
    <ligand>
        <name>Fe cation</name>
        <dbReference type="ChEBI" id="CHEBI:24875"/>
        <note>catalytic</note>
    </ligand>
</feature>
<feature type="binding site" evidence="3">
    <location>
        <position position="533"/>
    </location>
    <ligand>
        <name>Fe cation</name>
        <dbReference type="ChEBI" id="CHEBI:24875"/>
        <note>catalytic</note>
    </ligand>
</feature>
<feature type="binding site" evidence="3">
    <location>
        <position position="719"/>
    </location>
    <ligand>
        <name>Fe cation</name>
        <dbReference type="ChEBI" id="CHEBI:24875"/>
        <note>catalytic</note>
    </ligand>
</feature>
<feature type="binding site" evidence="3">
    <location>
        <position position="723"/>
    </location>
    <ligand>
        <name>Fe cation</name>
        <dbReference type="ChEBI" id="CHEBI:24875"/>
        <note>catalytic</note>
    </ligand>
</feature>
<feature type="binding site" evidence="3">
    <location>
        <position position="877"/>
    </location>
    <ligand>
        <name>Fe cation</name>
        <dbReference type="ChEBI" id="CHEBI:24875"/>
        <note>catalytic</note>
    </ligand>
</feature>
<accession>Q53RB0</accession>
<accession>Q10EH0</accession>